<name>RF1_CLOAB</name>
<evidence type="ECO:0000255" key="1">
    <source>
        <dbReference type="HAMAP-Rule" id="MF_00093"/>
    </source>
</evidence>
<accession>Q97F68</accession>
<feature type="chain" id="PRO_0000177660" description="Peptide chain release factor 1">
    <location>
        <begin position="1"/>
        <end position="359"/>
    </location>
</feature>
<feature type="modified residue" description="N5-methylglutamine" evidence="1">
    <location>
        <position position="233"/>
    </location>
</feature>
<gene>
    <name evidence="1" type="primary">prfA</name>
    <name type="ordered locus">CA_C2884</name>
</gene>
<keyword id="KW-0963">Cytoplasm</keyword>
<keyword id="KW-0488">Methylation</keyword>
<keyword id="KW-0648">Protein biosynthesis</keyword>
<keyword id="KW-1185">Reference proteome</keyword>
<dbReference type="EMBL" id="AE001437">
    <property type="protein sequence ID" value="AAK80827.1"/>
    <property type="molecule type" value="Genomic_DNA"/>
</dbReference>
<dbReference type="PIR" id="H97254">
    <property type="entry name" value="H97254"/>
</dbReference>
<dbReference type="RefSeq" id="NP_349487.1">
    <property type="nucleotide sequence ID" value="NC_003030.1"/>
</dbReference>
<dbReference type="RefSeq" id="WP_010966168.1">
    <property type="nucleotide sequence ID" value="NC_003030.1"/>
</dbReference>
<dbReference type="SMR" id="Q97F68"/>
<dbReference type="STRING" id="272562.CA_C2884"/>
<dbReference type="GeneID" id="44999372"/>
<dbReference type="KEGG" id="cac:CA_C2884"/>
<dbReference type="PATRIC" id="fig|272562.8.peg.3068"/>
<dbReference type="eggNOG" id="COG0216">
    <property type="taxonomic scope" value="Bacteria"/>
</dbReference>
<dbReference type="HOGENOM" id="CLU_036856_0_1_9"/>
<dbReference type="OrthoDB" id="9806673at2"/>
<dbReference type="Proteomes" id="UP000000814">
    <property type="component" value="Chromosome"/>
</dbReference>
<dbReference type="GO" id="GO:0005737">
    <property type="term" value="C:cytoplasm"/>
    <property type="evidence" value="ECO:0007669"/>
    <property type="project" value="UniProtKB-SubCell"/>
</dbReference>
<dbReference type="GO" id="GO:0016149">
    <property type="term" value="F:translation release factor activity, codon specific"/>
    <property type="evidence" value="ECO:0007669"/>
    <property type="project" value="UniProtKB-UniRule"/>
</dbReference>
<dbReference type="FunFam" id="3.30.160.20:FF:000004">
    <property type="entry name" value="Peptide chain release factor 1"/>
    <property type="match status" value="1"/>
</dbReference>
<dbReference type="FunFam" id="3.30.70.1660:FF:000002">
    <property type="entry name" value="Peptide chain release factor 1"/>
    <property type="match status" value="1"/>
</dbReference>
<dbReference type="FunFam" id="3.30.70.1660:FF:000004">
    <property type="entry name" value="Peptide chain release factor 1"/>
    <property type="match status" value="1"/>
</dbReference>
<dbReference type="Gene3D" id="3.30.160.20">
    <property type="match status" value="1"/>
</dbReference>
<dbReference type="Gene3D" id="3.30.70.1660">
    <property type="match status" value="1"/>
</dbReference>
<dbReference type="Gene3D" id="6.10.140.1950">
    <property type="match status" value="1"/>
</dbReference>
<dbReference type="HAMAP" id="MF_00093">
    <property type="entry name" value="Rel_fac_1"/>
    <property type="match status" value="1"/>
</dbReference>
<dbReference type="InterPro" id="IPR005139">
    <property type="entry name" value="PCRF"/>
</dbReference>
<dbReference type="InterPro" id="IPR000352">
    <property type="entry name" value="Pep_chain_release_fac_I"/>
</dbReference>
<dbReference type="InterPro" id="IPR045853">
    <property type="entry name" value="Pep_chain_release_fac_I_sf"/>
</dbReference>
<dbReference type="InterPro" id="IPR050057">
    <property type="entry name" value="Prokaryotic/Mito_RF"/>
</dbReference>
<dbReference type="InterPro" id="IPR004373">
    <property type="entry name" value="RF-1"/>
</dbReference>
<dbReference type="NCBIfam" id="TIGR00019">
    <property type="entry name" value="prfA"/>
    <property type="match status" value="1"/>
</dbReference>
<dbReference type="NCBIfam" id="NF001859">
    <property type="entry name" value="PRK00591.1"/>
    <property type="match status" value="1"/>
</dbReference>
<dbReference type="PANTHER" id="PTHR43804">
    <property type="entry name" value="LD18447P"/>
    <property type="match status" value="1"/>
</dbReference>
<dbReference type="PANTHER" id="PTHR43804:SF7">
    <property type="entry name" value="LD18447P"/>
    <property type="match status" value="1"/>
</dbReference>
<dbReference type="Pfam" id="PF03462">
    <property type="entry name" value="PCRF"/>
    <property type="match status" value="1"/>
</dbReference>
<dbReference type="Pfam" id="PF00472">
    <property type="entry name" value="RF-1"/>
    <property type="match status" value="1"/>
</dbReference>
<dbReference type="SMART" id="SM00937">
    <property type="entry name" value="PCRF"/>
    <property type="match status" value="1"/>
</dbReference>
<dbReference type="SUPFAM" id="SSF75620">
    <property type="entry name" value="Release factor"/>
    <property type="match status" value="1"/>
</dbReference>
<dbReference type="PROSITE" id="PS00745">
    <property type="entry name" value="RF_PROK_I"/>
    <property type="match status" value="1"/>
</dbReference>
<sequence>MLERLEFIESKYDELSVKISDPSVMANQSEWQKLCKEHSEVENIVLKYREYKKAKEDLEADKEMLRDKIDAELKEMVEEEIKELEKSVVDYEEELRVMLLPKDPNDSKNVFVEIRGGTGGEEAALFAADLFRMYTRYAERQGWHTEVMSANETDIGGFKEIVFMVKGNGAYSRMKYESGTHRVQRVPNTESSGRIHTSAATVAVLPEVDDVDIEINPNDIRIDVFRASGHGGQCVNTTDSAVRITHLPTGIVVSCQDEKRQLKNKEKAMKVLRARLYEKAEAERNAGIAENRRNQVGSGDRSERIRTYNFPQGRITDHRIGLTIYKLEQFLDGDIDEVINGLITAEQAEKMKEMGNTKD</sequence>
<protein>
    <recommendedName>
        <fullName evidence="1">Peptide chain release factor 1</fullName>
        <shortName evidence="1">RF-1</shortName>
    </recommendedName>
</protein>
<reference key="1">
    <citation type="journal article" date="2001" name="J. Bacteriol.">
        <title>Genome sequence and comparative analysis of the solvent-producing bacterium Clostridium acetobutylicum.</title>
        <authorList>
            <person name="Noelling J."/>
            <person name="Breton G."/>
            <person name="Omelchenko M.V."/>
            <person name="Makarova K.S."/>
            <person name="Zeng Q."/>
            <person name="Gibson R."/>
            <person name="Lee H.M."/>
            <person name="Dubois J."/>
            <person name="Qiu D."/>
            <person name="Hitti J."/>
            <person name="Wolf Y.I."/>
            <person name="Tatusov R.L."/>
            <person name="Sabathe F."/>
            <person name="Doucette-Stamm L.A."/>
            <person name="Soucaille P."/>
            <person name="Daly M.J."/>
            <person name="Bennett G.N."/>
            <person name="Koonin E.V."/>
            <person name="Smith D.R."/>
        </authorList>
    </citation>
    <scope>NUCLEOTIDE SEQUENCE [LARGE SCALE GENOMIC DNA]</scope>
    <source>
        <strain>ATCC 824 / DSM 792 / JCM 1419 / IAM 19013 / LMG 5710 / NBRC 13948 / NRRL B-527 / VKM B-1787 / 2291 / W</strain>
    </source>
</reference>
<organism>
    <name type="scientific">Clostridium acetobutylicum (strain ATCC 824 / DSM 792 / JCM 1419 / IAM 19013 / LMG 5710 / NBRC 13948 / NRRL B-527 / VKM B-1787 / 2291 / W)</name>
    <dbReference type="NCBI Taxonomy" id="272562"/>
    <lineage>
        <taxon>Bacteria</taxon>
        <taxon>Bacillati</taxon>
        <taxon>Bacillota</taxon>
        <taxon>Clostridia</taxon>
        <taxon>Eubacteriales</taxon>
        <taxon>Clostridiaceae</taxon>
        <taxon>Clostridium</taxon>
    </lineage>
</organism>
<proteinExistence type="inferred from homology"/>
<comment type="function">
    <text evidence="1">Peptide chain release factor 1 directs the termination of translation in response to the peptide chain termination codons UAG and UAA.</text>
</comment>
<comment type="subcellular location">
    <subcellularLocation>
        <location evidence="1">Cytoplasm</location>
    </subcellularLocation>
</comment>
<comment type="PTM">
    <text evidence="1">Methylated by PrmC. Methylation increases the termination efficiency of RF1.</text>
</comment>
<comment type="similarity">
    <text evidence="1">Belongs to the prokaryotic/mitochondrial release factor family.</text>
</comment>